<organism>
    <name type="scientific">Aliivibrio fischeri (strain ATCC 700601 / ES114)</name>
    <name type="common">Vibrio fischeri</name>
    <dbReference type="NCBI Taxonomy" id="312309"/>
    <lineage>
        <taxon>Bacteria</taxon>
        <taxon>Pseudomonadati</taxon>
        <taxon>Pseudomonadota</taxon>
        <taxon>Gammaproteobacteria</taxon>
        <taxon>Vibrionales</taxon>
        <taxon>Vibrionaceae</taxon>
        <taxon>Aliivibrio</taxon>
    </lineage>
</organism>
<name>DGTL1_ALIF1</name>
<protein>
    <recommendedName>
        <fullName evidence="1">Deoxyguanosinetriphosphate triphosphohydrolase-like protein</fullName>
    </recommendedName>
</protein>
<comment type="similarity">
    <text evidence="1">Belongs to the dGTPase family. Type 2 subfamily.</text>
</comment>
<keyword id="KW-0378">Hydrolase</keyword>
<keyword id="KW-1185">Reference proteome</keyword>
<dbReference type="EMBL" id="CP000020">
    <property type="protein sequence ID" value="AAW86177.1"/>
    <property type="molecule type" value="Genomic_DNA"/>
</dbReference>
<dbReference type="RefSeq" id="WP_011262236.1">
    <property type="nucleotide sequence ID" value="NC_006840.2"/>
</dbReference>
<dbReference type="RefSeq" id="YP_205065.1">
    <property type="nucleotide sequence ID" value="NC_006840.2"/>
</dbReference>
<dbReference type="SMR" id="Q5E469"/>
<dbReference type="STRING" id="312309.VF_1682"/>
<dbReference type="EnsemblBacteria" id="AAW86177">
    <property type="protein sequence ID" value="AAW86177"/>
    <property type="gene ID" value="VF_1682"/>
</dbReference>
<dbReference type="GeneID" id="54164376"/>
<dbReference type="KEGG" id="vfi:VF_1682"/>
<dbReference type="PATRIC" id="fig|312309.11.peg.1703"/>
<dbReference type="eggNOG" id="COG0232">
    <property type="taxonomic scope" value="Bacteria"/>
</dbReference>
<dbReference type="HOGENOM" id="CLU_028163_0_0_6"/>
<dbReference type="OrthoDB" id="9803619at2"/>
<dbReference type="Proteomes" id="UP000000537">
    <property type="component" value="Chromosome I"/>
</dbReference>
<dbReference type="GO" id="GO:0008832">
    <property type="term" value="F:dGTPase activity"/>
    <property type="evidence" value="ECO:0007669"/>
    <property type="project" value="TreeGrafter"/>
</dbReference>
<dbReference type="GO" id="GO:0006203">
    <property type="term" value="P:dGTP catabolic process"/>
    <property type="evidence" value="ECO:0007669"/>
    <property type="project" value="TreeGrafter"/>
</dbReference>
<dbReference type="CDD" id="cd00077">
    <property type="entry name" value="HDc"/>
    <property type="match status" value="1"/>
</dbReference>
<dbReference type="Gene3D" id="1.10.3210.10">
    <property type="entry name" value="Hypothetical protein af1432"/>
    <property type="match status" value="1"/>
</dbReference>
<dbReference type="HAMAP" id="MF_01212">
    <property type="entry name" value="dGTPase_type2"/>
    <property type="match status" value="1"/>
</dbReference>
<dbReference type="InterPro" id="IPR006261">
    <property type="entry name" value="dGTPase"/>
</dbReference>
<dbReference type="InterPro" id="IPR050135">
    <property type="entry name" value="dGTPase-like"/>
</dbReference>
<dbReference type="InterPro" id="IPR023023">
    <property type="entry name" value="dNTPase_2"/>
</dbReference>
<dbReference type="InterPro" id="IPR003607">
    <property type="entry name" value="HD/PDEase_dom"/>
</dbReference>
<dbReference type="InterPro" id="IPR006674">
    <property type="entry name" value="HD_domain"/>
</dbReference>
<dbReference type="InterPro" id="IPR026875">
    <property type="entry name" value="PHydrolase_assoc_dom"/>
</dbReference>
<dbReference type="NCBIfam" id="NF041026">
    <property type="entry name" value="antiphage_dGTPase"/>
    <property type="match status" value="1"/>
</dbReference>
<dbReference type="NCBIfam" id="TIGR01353">
    <property type="entry name" value="dGTP_triPase"/>
    <property type="match status" value="1"/>
</dbReference>
<dbReference type="NCBIfam" id="NF003701">
    <property type="entry name" value="PRK05318.1"/>
    <property type="match status" value="1"/>
</dbReference>
<dbReference type="PANTHER" id="PTHR11373:SF40">
    <property type="entry name" value="DEOXYGUANOSINETRIPHOSPHATE TRIPHOSPHOHYDROLASE-LIKE PROTEIN 2"/>
    <property type="match status" value="1"/>
</dbReference>
<dbReference type="PANTHER" id="PTHR11373">
    <property type="entry name" value="DEOXYNUCLEOSIDE TRIPHOSPHATE TRIPHOSPHOHYDROLASE"/>
    <property type="match status" value="1"/>
</dbReference>
<dbReference type="Pfam" id="PF01966">
    <property type="entry name" value="HD"/>
    <property type="match status" value="1"/>
</dbReference>
<dbReference type="Pfam" id="PF13286">
    <property type="entry name" value="HD_assoc"/>
    <property type="match status" value="1"/>
</dbReference>
<dbReference type="SMART" id="SM00471">
    <property type="entry name" value="HDc"/>
    <property type="match status" value="1"/>
</dbReference>
<dbReference type="SUPFAM" id="SSF109604">
    <property type="entry name" value="HD-domain/PDEase-like"/>
    <property type="match status" value="1"/>
</dbReference>
<dbReference type="PROSITE" id="PS51831">
    <property type="entry name" value="HD"/>
    <property type="match status" value="1"/>
</dbReference>
<accession>Q5E469</accession>
<reference key="1">
    <citation type="journal article" date="2005" name="Proc. Natl. Acad. Sci. U.S.A.">
        <title>Complete genome sequence of Vibrio fischeri: a symbiotic bacterium with pathogenic congeners.</title>
        <authorList>
            <person name="Ruby E.G."/>
            <person name="Urbanowski M."/>
            <person name="Campbell J."/>
            <person name="Dunn A."/>
            <person name="Faini M."/>
            <person name="Gunsalus R."/>
            <person name="Lostroh P."/>
            <person name="Lupp C."/>
            <person name="McCann J."/>
            <person name="Millikan D."/>
            <person name="Schaefer A."/>
            <person name="Stabb E."/>
            <person name="Stevens A."/>
            <person name="Visick K."/>
            <person name="Whistler C."/>
            <person name="Greenberg E.P."/>
        </authorList>
    </citation>
    <scope>NUCLEOTIDE SEQUENCE [LARGE SCALE GENOMIC DNA]</scope>
    <source>
        <strain>ATCC 700601 / ES114</strain>
    </source>
</reference>
<gene>
    <name type="ordered locus">VF_1682</name>
</gene>
<evidence type="ECO:0000255" key="1">
    <source>
        <dbReference type="HAMAP-Rule" id="MF_01212"/>
    </source>
</evidence>
<evidence type="ECO:0000255" key="2">
    <source>
        <dbReference type="PROSITE-ProRule" id="PRU01175"/>
    </source>
</evidence>
<feature type="chain" id="PRO_1000066444" description="Deoxyguanosinetriphosphate triphosphohydrolase-like protein">
    <location>
        <begin position="1"/>
        <end position="448"/>
    </location>
</feature>
<feature type="domain" description="HD" evidence="2">
    <location>
        <begin position="67"/>
        <end position="260"/>
    </location>
</feature>
<sequence length="448" mass="51355">MNKTNEITLSPHWEDRISNEQKLRRNDQRSVFQRDRARILHSAAFRRLQAKTQVHGPGSANDFYRTRLTHSLEVSQIGTGVVAQLKLRQPEFRALLTSTSLMESICLAHDIGHPPFGHGGEIALNYMMRDHGGFEGNGQTLRILSKLEPYTEHFGMNLARRTLLGVLKYPAFLDQVHSTERPQEVTNVRHLKSIDWHPPKGVYRDDADILNWILKPLSDVDKALFSTFRFQQDSQNTHRKTRFKSIDCSIMELADDIAYGVHDLEDAIVMGIVTRNQWQESVASKLAECGDEWFEANIETISDKLFSGLQYQRKDGIGSIVNALLTSITIKPTTFNDEAEFESELLRWNAFLSPSMSYALEVLKKFVGQFVIHNSEMQRIEYKGQQIVMEIFDALNSDPERLLPENDKREWREAKESGANAHRVIADYIAGMTDGYAQRLYNQLFVPI</sequence>
<proteinExistence type="inferred from homology"/>